<sequence length="103" mass="11767">MQNQRIRIRLKAFDHRLIDQSTAEIVETAKRTGAQVRGPIPLPTRKERFTVLISPHVNKDARDQYEIRTHKRLVDIVEPTEKTVDALMRLDLAAGVDVQISLG</sequence>
<comment type="function">
    <text evidence="1">Involved in the binding of tRNA to the ribosomes.</text>
</comment>
<comment type="subunit">
    <text evidence="1">Part of the 30S ribosomal subunit.</text>
</comment>
<comment type="similarity">
    <text evidence="1">Belongs to the universal ribosomal protein uS10 family.</text>
</comment>
<gene>
    <name evidence="1" type="primary">rpsJ</name>
    <name type="ordered locus">HAPS_1605</name>
</gene>
<name>RS10_GLAP5</name>
<feature type="chain" id="PRO_1000146057" description="Small ribosomal subunit protein uS10">
    <location>
        <begin position="1"/>
        <end position="103"/>
    </location>
</feature>
<proteinExistence type="inferred from homology"/>
<protein>
    <recommendedName>
        <fullName evidence="1">Small ribosomal subunit protein uS10</fullName>
    </recommendedName>
    <alternativeName>
        <fullName evidence="2">30S ribosomal protein S10</fullName>
    </alternativeName>
</protein>
<keyword id="KW-1185">Reference proteome</keyword>
<keyword id="KW-0687">Ribonucleoprotein</keyword>
<keyword id="KW-0689">Ribosomal protein</keyword>
<evidence type="ECO:0000255" key="1">
    <source>
        <dbReference type="HAMAP-Rule" id="MF_00508"/>
    </source>
</evidence>
<evidence type="ECO:0000305" key="2"/>
<reference key="1">
    <citation type="journal article" date="2009" name="J. Bacteriol.">
        <title>Complete genome sequence of Haemophilus parasuis SH0165.</title>
        <authorList>
            <person name="Yue M."/>
            <person name="Yang F."/>
            <person name="Yang J."/>
            <person name="Bei W."/>
            <person name="Cai X."/>
            <person name="Chen L."/>
            <person name="Dong J."/>
            <person name="Zhou R."/>
            <person name="Jin M."/>
            <person name="Jin Q."/>
            <person name="Chen H."/>
        </authorList>
    </citation>
    <scope>NUCLEOTIDE SEQUENCE [LARGE SCALE GENOMIC DNA]</scope>
    <source>
        <strain>SH0165</strain>
    </source>
</reference>
<dbReference type="EMBL" id="CP001321">
    <property type="protein sequence ID" value="ACL33156.1"/>
    <property type="molecule type" value="Genomic_DNA"/>
</dbReference>
<dbReference type="RefSeq" id="WP_001181005.1">
    <property type="nucleotide sequence ID" value="NC_011852.1"/>
</dbReference>
<dbReference type="SMR" id="B8F754"/>
<dbReference type="STRING" id="557723.HAPS_1605"/>
<dbReference type="GeneID" id="98390443"/>
<dbReference type="KEGG" id="hap:HAPS_1605"/>
<dbReference type="HOGENOM" id="CLU_122625_1_3_6"/>
<dbReference type="Proteomes" id="UP000006743">
    <property type="component" value="Chromosome"/>
</dbReference>
<dbReference type="GO" id="GO:1990904">
    <property type="term" value="C:ribonucleoprotein complex"/>
    <property type="evidence" value="ECO:0007669"/>
    <property type="project" value="UniProtKB-KW"/>
</dbReference>
<dbReference type="GO" id="GO:0005840">
    <property type="term" value="C:ribosome"/>
    <property type="evidence" value="ECO:0007669"/>
    <property type="project" value="UniProtKB-KW"/>
</dbReference>
<dbReference type="GO" id="GO:0003735">
    <property type="term" value="F:structural constituent of ribosome"/>
    <property type="evidence" value="ECO:0007669"/>
    <property type="project" value="InterPro"/>
</dbReference>
<dbReference type="GO" id="GO:0000049">
    <property type="term" value="F:tRNA binding"/>
    <property type="evidence" value="ECO:0007669"/>
    <property type="project" value="UniProtKB-UniRule"/>
</dbReference>
<dbReference type="GO" id="GO:0006412">
    <property type="term" value="P:translation"/>
    <property type="evidence" value="ECO:0007669"/>
    <property type="project" value="UniProtKB-UniRule"/>
</dbReference>
<dbReference type="FunFam" id="3.30.70.600:FF:000001">
    <property type="entry name" value="30S ribosomal protein S10"/>
    <property type="match status" value="1"/>
</dbReference>
<dbReference type="Gene3D" id="3.30.70.600">
    <property type="entry name" value="Ribosomal protein S10 domain"/>
    <property type="match status" value="1"/>
</dbReference>
<dbReference type="HAMAP" id="MF_00508">
    <property type="entry name" value="Ribosomal_uS10"/>
    <property type="match status" value="1"/>
</dbReference>
<dbReference type="InterPro" id="IPR001848">
    <property type="entry name" value="Ribosomal_uS10"/>
</dbReference>
<dbReference type="InterPro" id="IPR018268">
    <property type="entry name" value="Ribosomal_uS10_CS"/>
</dbReference>
<dbReference type="InterPro" id="IPR027486">
    <property type="entry name" value="Ribosomal_uS10_dom"/>
</dbReference>
<dbReference type="InterPro" id="IPR036838">
    <property type="entry name" value="Ribosomal_uS10_dom_sf"/>
</dbReference>
<dbReference type="NCBIfam" id="NF001861">
    <property type="entry name" value="PRK00596.1"/>
    <property type="match status" value="1"/>
</dbReference>
<dbReference type="NCBIfam" id="TIGR01049">
    <property type="entry name" value="rpsJ_bact"/>
    <property type="match status" value="1"/>
</dbReference>
<dbReference type="PANTHER" id="PTHR11700">
    <property type="entry name" value="30S RIBOSOMAL PROTEIN S10 FAMILY MEMBER"/>
    <property type="match status" value="1"/>
</dbReference>
<dbReference type="Pfam" id="PF00338">
    <property type="entry name" value="Ribosomal_S10"/>
    <property type="match status" value="1"/>
</dbReference>
<dbReference type="PRINTS" id="PR00971">
    <property type="entry name" value="RIBOSOMALS10"/>
</dbReference>
<dbReference type="SMART" id="SM01403">
    <property type="entry name" value="Ribosomal_S10"/>
    <property type="match status" value="1"/>
</dbReference>
<dbReference type="SUPFAM" id="SSF54999">
    <property type="entry name" value="Ribosomal protein S10"/>
    <property type="match status" value="1"/>
</dbReference>
<dbReference type="PROSITE" id="PS00361">
    <property type="entry name" value="RIBOSOMAL_S10"/>
    <property type="match status" value="1"/>
</dbReference>
<organism>
    <name type="scientific">Glaesserella parasuis serovar 5 (strain SH0165)</name>
    <name type="common">Haemophilus parasuis</name>
    <dbReference type="NCBI Taxonomy" id="557723"/>
    <lineage>
        <taxon>Bacteria</taxon>
        <taxon>Pseudomonadati</taxon>
        <taxon>Pseudomonadota</taxon>
        <taxon>Gammaproteobacteria</taxon>
        <taxon>Pasteurellales</taxon>
        <taxon>Pasteurellaceae</taxon>
        <taxon>Glaesserella</taxon>
    </lineage>
</organism>
<accession>B8F754</accession>